<comment type="function">
    <text evidence="1">Non-catalytic component of the H/ACA small nucleolar ribonucleoprotein (H/ACA snoRNP), which catalyzes pseudouridylation of rRNA and is required for ribosome biogenesis. This involves the isomerization of uridine such that the ribose is subsequently attached to C5, instead of the normal N1. Pseudouridine ('psi') residues may serve to stabilize the conformation of rRNAs. The H/ACA snoRNP complex also mediates pseudouridylation of other types of RNAs. The H/ACA snoRNP complex mediates pseudouridylation at position 93 in U2 snRNA.</text>
</comment>
<comment type="subunit">
    <text evidence="1">Component of the small nucleolar ribonucleoprotein particles containing H/ACA-type snoRNAs (H/ACA snoRNPs).</text>
</comment>
<comment type="subcellular location">
    <subcellularLocation>
        <location evidence="1">Nucleus</location>
        <location evidence="1">Nucleolus</location>
    </subcellularLocation>
</comment>
<comment type="similarity">
    <text evidence="3">Belongs to the GAR1 family.</text>
</comment>
<accession>Q2HH48</accession>
<evidence type="ECO:0000250" key="1">
    <source>
        <dbReference type="UniProtKB" id="P28007"/>
    </source>
</evidence>
<evidence type="ECO:0000256" key="2">
    <source>
        <dbReference type="SAM" id="MobiDB-lite"/>
    </source>
</evidence>
<evidence type="ECO:0000305" key="3"/>
<organism>
    <name type="scientific">Chaetomium globosum (strain ATCC 6205 / CBS 148.51 / DSM 1962 / NBRC 6347 / NRRL 1970)</name>
    <name type="common">Soil fungus</name>
    <dbReference type="NCBI Taxonomy" id="306901"/>
    <lineage>
        <taxon>Eukaryota</taxon>
        <taxon>Fungi</taxon>
        <taxon>Dikarya</taxon>
        <taxon>Ascomycota</taxon>
        <taxon>Pezizomycotina</taxon>
        <taxon>Sordariomycetes</taxon>
        <taxon>Sordariomycetidae</taxon>
        <taxon>Sordariales</taxon>
        <taxon>Chaetomiaceae</taxon>
        <taxon>Chaetomium</taxon>
    </lineage>
</organism>
<gene>
    <name type="primary">GAR1</name>
    <name type="ORF">CHGG_00456</name>
</gene>
<sequence length="210" mass="21140">MSFRGAPRGRGGGGFGGGRGGGRGGFQQRDMGPPATVLEMGKFIHACEGEMVIESTNPKVPHFNAPIYLENKTAVGKVDEVLGPINQVYFTIKPSEGIQATSFKYGDKFYIAGEKLLPLERFLPKPKPPPGTVSKVKKPSRGGAARGGRGGPGGGFSRGGGRGGGRGGFGGSRGGGGFGGGFGGGRGGAPRGGRGGFSRGGGRGGGRGRF</sequence>
<protein>
    <recommendedName>
        <fullName>H/ACA ribonucleoprotein complex subunit GAR1</fullName>
    </recommendedName>
    <alternativeName>
        <fullName>snoRNP protein GAR1</fullName>
    </alternativeName>
</protein>
<keyword id="KW-0539">Nucleus</keyword>
<keyword id="KW-1185">Reference proteome</keyword>
<keyword id="KW-0677">Repeat</keyword>
<keyword id="KW-0687">Ribonucleoprotein</keyword>
<keyword id="KW-0690">Ribosome biogenesis</keyword>
<keyword id="KW-0694">RNA-binding</keyword>
<keyword id="KW-0698">rRNA processing</keyword>
<feature type="chain" id="PRO_0000327525" description="H/ACA ribonucleoprotein complex subunit GAR1">
    <location>
        <begin position="1"/>
        <end position="210"/>
    </location>
</feature>
<feature type="region of interest" description="Disordered" evidence="2">
    <location>
        <begin position="1"/>
        <end position="32"/>
    </location>
</feature>
<feature type="region of interest" description="RGG-box 1">
    <location>
        <begin position="4"/>
        <end position="25"/>
    </location>
</feature>
<feature type="region of interest" description="Disordered" evidence="2">
    <location>
        <begin position="121"/>
        <end position="210"/>
    </location>
</feature>
<feature type="region of interest" description="RGG-box 2">
    <location>
        <begin position="141"/>
        <end position="205"/>
    </location>
</feature>
<feature type="compositionally biased region" description="Gly residues" evidence="2">
    <location>
        <begin position="8"/>
        <end position="25"/>
    </location>
</feature>
<feature type="compositionally biased region" description="Gly residues" evidence="2">
    <location>
        <begin position="144"/>
        <end position="210"/>
    </location>
</feature>
<reference key="1">
    <citation type="journal article" date="2015" name="Genome Announc.">
        <title>Draft genome sequence of the cellulolytic fungus Chaetomium globosum.</title>
        <authorList>
            <person name="Cuomo C.A."/>
            <person name="Untereiner W.A."/>
            <person name="Ma L.-J."/>
            <person name="Grabherr M."/>
            <person name="Birren B.W."/>
        </authorList>
    </citation>
    <scope>NUCLEOTIDE SEQUENCE [LARGE SCALE GENOMIC DNA]</scope>
    <source>
        <strain>ATCC 6205 / CBS 148.51 / DSM 1962 / NBRC 6347 / NRRL 1970</strain>
    </source>
</reference>
<proteinExistence type="inferred from homology"/>
<name>GAR1_CHAGB</name>
<dbReference type="EMBL" id="CH408029">
    <property type="protein sequence ID" value="EAQ92221.1"/>
    <property type="molecule type" value="Genomic_DNA"/>
</dbReference>
<dbReference type="RefSeq" id="XP_001219677.1">
    <property type="nucleotide sequence ID" value="XM_001219676.1"/>
</dbReference>
<dbReference type="SMR" id="Q2HH48"/>
<dbReference type="FunCoup" id="Q2HH48">
    <property type="interactions" value="495"/>
</dbReference>
<dbReference type="STRING" id="306901.Q2HH48"/>
<dbReference type="GeneID" id="4387576"/>
<dbReference type="VEuPathDB" id="FungiDB:CHGG_00456"/>
<dbReference type="eggNOG" id="KOG3262">
    <property type="taxonomic scope" value="Eukaryota"/>
</dbReference>
<dbReference type="HOGENOM" id="CLU_080002_1_0_1"/>
<dbReference type="InParanoid" id="Q2HH48"/>
<dbReference type="OMA" id="KPQDGIV"/>
<dbReference type="OrthoDB" id="2187159at2759"/>
<dbReference type="Proteomes" id="UP000001056">
    <property type="component" value="Unassembled WGS sequence"/>
</dbReference>
<dbReference type="GO" id="GO:0031429">
    <property type="term" value="C:box H/ACA snoRNP complex"/>
    <property type="evidence" value="ECO:0007669"/>
    <property type="project" value="TreeGrafter"/>
</dbReference>
<dbReference type="GO" id="GO:0034513">
    <property type="term" value="F:box H/ACA snoRNA binding"/>
    <property type="evidence" value="ECO:0007669"/>
    <property type="project" value="TreeGrafter"/>
</dbReference>
<dbReference type="GO" id="GO:0000454">
    <property type="term" value="P:snoRNA guided rRNA pseudouridine synthesis"/>
    <property type="evidence" value="ECO:0007669"/>
    <property type="project" value="TreeGrafter"/>
</dbReference>
<dbReference type="FunFam" id="2.40.10.230:FF:000001">
    <property type="entry name" value="H/ACA ribonucleoprotein complex subunit"/>
    <property type="match status" value="1"/>
</dbReference>
<dbReference type="Gene3D" id="2.40.10.230">
    <property type="entry name" value="Probable tRNA pseudouridine synthase domain"/>
    <property type="match status" value="1"/>
</dbReference>
<dbReference type="InterPro" id="IPR038664">
    <property type="entry name" value="Gar1/Naf1_Cbf5-bd_sf"/>
</dbReference>
<dbReference type="InterPro" id="IPR007504">
    <property type="entry name" value="H/ACA_rnp_Gar1/Naf1"/>
</dbReference>
<dbReference type="InterPro" id="IPR009000">
    <property type="entry name" value="Transl_B-barrel_sf"/>
</dbReference>
<dbReference type="PANTHER" id="PTHR23237:SF6">
    <property type="entry name" value="H_ACA RIBONUCLEOPROTEIN COMPLEX SUBUNIT 1"/>
    <property type="match status" value="1"/>
</dbReference>
<dbReference type="PANTHER" id="PTHR23237">
    <property type="entry name" value="NUCLEOLAR PROTEIN FAMILY A MEMBER 1 SNORNP PROTEIN GAR1"/>
    <property type="match status" value="1"/>
</dbReference>
<dbReference type="Pfam" id="PF04410">
    <property type="entry name" value="Gar1"/>
    <property type="match status" value="1"/>
</dbReference>
<dbReference type="SUPFAM" id="SSF50447">
    <property type="entry name" value="Translation proteins"/>
    <property type="match status" value="1"/>
</dbReference>